<evidence type="ECO:0000255" key="1">
    <source>
        <dbReference type="PROSITE-ProRule" id="PRU00088"/>
    </source>
</evidence>
<evidence type="ECO:0000269" key="2">
    <source>
    </source>
</evidence>
<evidence type="ECO:0000269" key="3">
    <source>
    </source>
</evidence>
<evidence type="ECO:0000269" key="4">
    <source>
    </source>
</evidence>
<evidence type="ECO:0000303" key="5">
    <source>
    </source>
</evidence>
<evidence type="ECO:0000305" key="6"/>
<evidence type="ECO:0000305" key="7">
    <source>
    </source>
</evidence>
<comment type="function">
    <text evidence="4">Flavodoxin-like protein (FLP) that plays a role in cell wall integrity, oxidative stress protection and virulence (PubMed:26325183). FLPs act as NAD(P)H quinone oxidoreductases (PubMed:26325183). Reduces ubiquinone (coenzyme Q), enabling it to serve as an antioxidant in the membrane (PubMed:26325183).</text>
</comment>
<comment type="catalytic activity">
    <reaction evidence="7">
        <text>a quinone + NADH + H(+) = a quinol + NAD(+)</text>
        <dbReference type="Rhea" id="RHEA:46160"/>
        <dbReference type="ChEBI" id="CHEBI:15378"/>
        <dbReference type="ChEBI" id="CHEBI:24646"/>
        <dbReference type="ChEBI" id="CHEBI:57540"/>
        <dbReference type="ChEBI" id="CHEBI:57945"/>
        <dbReference type="ChEBI" id="CHEBI:132124"/>
        <dbReference type="EC" id="1.6.5.2"/>
    </reaction>
</comment>
<comment type="catalytic activity">
    <reaction evidence="7">
        <text>a quinone + NADPH + H(+) = a quinol + NADP(+)</text>
        <dbReference type="Rhea" id="RHEA:46164"/>
        <dbReference type="ChEBI" id="CHEBI:15378"/>
        <dbReference type="ChEBI" id="CHEBI:24646"/>
        <dbReference type="ChEBI" id="CHEBI:57783"/>
        <dbReference type="ChEBI" id="CHEBI:58349"/>
        <dbReference type="ChEBI" id="CHEBI:132124"/>
        <dbReference type="EC" id="1.6.5.2"/>
    </reaction>
</comment>
<comment type="cofactor">
    <cofactor evidence="1">
        <name>FMN</name>
        <dbReference type="ChEBI" id="CHEBI:58210"/>
    </cofactor>
</comment>
<comment type="subcellular location">
    <subcellularLocation>
        <location evidence="4">Cell membrane</location>
        <topology evidence="4">Peripheral membrane protein</topology>
    </subcellularLocation>
</comment>
<comment type="induction">
    <text evidence="2 3">Expression is induced in the presence of benomyl (PubMed:15273122). Expression is up-regulated by oxidative stress via CAP1 (PubMed:16545688).</text>
</comment>
<comment type="disruption phenotype">
    <text evidence="4">Quadruple mutant lacking all four FLPs (PST1, PST2, PST3 and YCP4) is more sensitive to benzoquinone and linolenic acid, a polyunsaturated fatty acid that can auto-oxidize and promote lipid peroxidation (PubMed:26325183). The quadruple mutant is also avirulent in a mouse model of systemic candidiasis (PubMed:26325183).</text>
</comment>
<comment type="similarity">
    <text evidence="6">Belongs to the WrbA family.</text>
</comment>
<name>PST2_CANAL</name>
<protein>
    <recommendedName>
        <fullName evidence="5">NAD(P)H quinone oxidoreductase PST2</fullName>
        <ecNumber evidence="7">1.6.5.2</ecNumber>
    </recommendedName>
    <alternativeName>
        <fullName evidence="5">Flavodoxin-like protein PST2</fullName>
        <shortName evidence="5">FLP PST2</shortName>
    </alternativeName>
</protein>
<feature type="chain" id="PRO_0000459477" description="NAD(P)H quinone oxidoreductase PST2">
    <location>
        <begin position="1"/>
        <end position="201"/>
    </location>
</feature>
<feature type="domain" description="Flavodoxin-like" evidence="1">
    <location>
        <begin position="6"/>
        <end position="192"/>
    </location>
</feature>
<feature type="binding site" evidence="1">
    <location>
        <begin position="12"/>
        <end position="16"/>
    </location>
    <ligand>
        <name>FMN</name>
        <dbReference type="ChEBI" id="CHEBI:58210"/>
    </ligand>
</feature>
<feature type="binding site" evidence="1">
    <location>
        <begin position="112"/>
        <end position="164"/>
    </location>
    <ligand>
        <name>FMN</name>
        <dbReference type="ChEBI" id="CHEBI:58210"/>
    </ligand>
</feature>
<accession>Q59Y37</accession>
<dbReference type="EC" id="1.6.5.2" evidence="7"/>
<dbReference type="EMBL" id="CP017624">
    <property type="protein sequence ID" value="AOW27852.1"/>
    <property type="molecule type" value="Genomic_DNA"/>
</dbReference>
<dbReference type="RefSeq" id="XP_714456.1">
    <property type="nucleotide sequence ID" value="XM_709363.1"/>
</dbReference>
<dbReference type="SMR" id="Q59Y37"/>
<dbReference type="STRING" id="237561.Q59Y37"/>
<dbReference type="EnsemblFungi" id="C2_08640C_A-T">
    <property type="protein sequence ID" value="C2_08640C_A-T-p1"/>
    <property type="gene ID" value="C2_08640C_A"/>
</dbReference>
<dbReference type="GeneID" id="3643909"/>
<dbReference type="KEGG" id="cal:CAALFM_C208640CA"/>
<dbReference type="CGD" id="CAL0000176544">
    <property type="gene designation" value="PST2"/>
</dbReference>
<dbReference type="VEuPathDB" id="FungiDB:C2_08640C_A"/>
<dbReference type="eggNOG" id="KOG3135">
    <property type="taxonomic scope" value="Eukaryota"/>
</dbReference>
<dbReference type="HOGENOM" id="CLU_051402_0_1_1"/>
<dbReference type="InParanoid" id="Q59Y37"/>
<dbReference type="OMA" id="GMFELEQ"/>
<dbReference type="OrthoDB" id="504689at2759"/>
<dbReference type="PHI-base" id="PHI:5051"/>
<dbReference type="Proteomes" id="UP000000559">
    <property type="component" value="Chromosome 2"/>
</dbReference>
<dbReference type="GO" id="GO:0005576">
    <property type="term" value="C:extracellular region"/>
    <property type="evidence" value="ECO:0000314"/>
    <property type="project" value="CGD"/>
</dbReference>
<dbReference type="GO" id="GO:0062040">
    <property type="term" value="C:fungal biofilm matrix"/>
    <property type="evidence" value="ECO:0000314"/>
    <property type="project" value="CGD"/>
</dbReference>
<dbReference type="GO" id="GO:0030446">
    <property type="term" value="C:hyphal cell wall"/>
    <property type="evidence" value="ECO:0000314"/>
    <property type="project" value="CGD"/>
</dbReference>
<dbReference type="GO" id="GO:0016020">
    <property type="term" value="C:membrane"/>
    <property type="evidence" value="ECO:0000318"/>
    <property type="project" value="GO_Central"/>
</dbReference>
<dbReference type="GO" id="GO:0005886">
    <property type="term" value="C:plasma membrane"/>
    <property type="evidence" value="ECO:0000314"/>
    <property type="project" value="CGD"/>
</dbReference>
<dbReference type="GO" id="GO:0050625">
    <property type="term" value="F:2-hydroxy-1,4-benzoquinone reductase (NADH) activity"/>
    <property type="evidence" value="ECO:0000303"/>
    <property type="project" value="CGD"/>
</dbReference>
<dbReference type="GO" id="GO:0010181">
    <property type="term" value="F:FMN binding"/>
    <property type="evidence" value="ECO:0007669"/>
    <property type="project" value="InterPro"/>
</dbReference>
<dbReference type="GO" id="GO:0003955">
    <property type="term" value="F:NAD(P)H dehydrogenase (quinone) activity"/>
    <property type="evidence" value="ECO:0000318"/>
    <property type="project" value="GO_Central"/>
</dbReference>
<dbReference type="GO" id="GO:0034599">
    <property type="term" value="P:cellular response to oxidative stress"/>
    <property type="evidence" value="ECO:0000316"/>
    <property type="project" value="CGD"/>
</dbReference>
<dbReference type="FunFam" id="3.40.50.360:FF:000001">
    <property type="entry name" value="NAD(P)H dehydrogenase (Quinone) FQR1-like"/>
    <property type="match status" value="1"/>
</dbReference>
<dbReference type="Gene3D" id="3.40.50.360">
    <property type="match status" value="1"/>
</dbReference>
<dbReference type="InterPro" id="IPR008254">
    <property type="entry name" value="Flavodoxin/NO_synth"/>
</dbReference>
<dbReference type="InterPro" id="IPR029039">
    <property type="entry name" value="Flavoprotein-like_sf"/>
</dbReference>
<dbReference type="InterPro" id="IPR010089">
    <property type="entry name" value="Flavoprotein_WrbA-like"/>
</dbReference>
<dbReference type="InterPro" id="IPR005025">
    <property type="entry name" value="FMN_Rdtase-like_dom"/>
</dbReference>
<dbReference type="NCBIfam" id="TIGR01755">
    <property type="entry name" value="flav_wrbA"/>
    <property type="match status" value="1"/>
</dbReference>
<dbReference type="NCBIfam" id="NF002999">
    <property type="entry name" value="PRK03767.1"/>
    <property type="match status" value="1"/>
</dbReference>
<dbReference type="PANTHER" id="PTHR30546">
    <property type="entry name" value="FLAVODOXIN-RELATED PROTEIN WRBA-RELATED"/>
    <property type="match status" value="1"/>
</dbReference>
<dbReference type="PANTHER" id="PTHR30546:SF23">
    <property type="entry name" value="FLAVOPROTEIN-LIKE PROTEIN YCP4-RELATED"/>
    <property type="match status" value="1"/>
</dbReference>
<dbReference type="Pfam" id="PF03358">
    <property type="entry name" value="FMN_red"/>
    <property type="match status" value="1"/>
</dbReference>
<dbReference type="SUPFAM" id="SSF52218">
    <property type="entry name" value="Flavoproteins"/>
    <property type="match status" value="1"/>
</dbReference>
<dbReference type="PROSITE" id="PS50902">
    <property type="entry name" value="FLAVODOXIN_LIKE"/>
    <property type="match status" value="1"/>
</dbReference>
<sequence>MSKPRVAIIIYSLYHHVYTLAESAKIGIEAAGVKPDLFQVPETLTPEILKLVKAPPKPDIPIAEPKILNNYDAFLFGIPTRFGNMPAQWKGFWDGTGGQWARGDLRGKYAGVFVSTGTPGGGQETTVINTLSTLAHHGIVYVPFGYGSPRLADLNEVHGGSPWGAGTFAGADGSREVTELEKSIAQQQGEDFIKTITQFKQ</sequence>
<organism>
    <name type="scientific">Candida albicans (strain SC5314 / ATCC MYA-2876)</name>
    <name type="common">Yeast</name>
    <dbReference type="NCBI Taxonomy" id="237561"/>
    <lineage>
        <taxon>Eukaryota</taxon>
        <taxon>Fungi</taxon>
        <taxon>Dikarya</taxon>
        <taxon>Ascomycota</taxon>
        <taxon>Saccharomycotina</taxon>
        <taxon>Pichiomycetes</taxon>
        <taxon>Debaryomycetaceae</taxon>
        <taxon>Candida/Lodderomyces clade</taxon>
        <taxon>Candida</taxon>
    </lineage>
</organism>
<keyword id="KW-1003">Cell membrane</keyword>
<keyword id="KW-0285">Flavoprotein</keyword>
<keyword id="KW-0288">FMN</keyword>
<keyword id="KW-0472">Membrane</keyword>
<keyword id="KW-0520">NAD</keyword>
<keyword id="KW-0547">Nucleotide-binding</keyword>
<keyword id="KW-0560">Oxidoreductase</keyword>
<keyword id="KW-1185">Reference proteome</keyword>
<keyword id="KW-0843">Virulence</keyword>
<reference key="1">
    <citation type="journal article" date="2004" name="Proc. Natl. Acad. Sci. U.S.A.">
        <title>The diploid genome sequence of Candida albicans.</title>
        <authorList>
            <person name="Jones T."/>
            <person name="Federspiel N.A."/>
            <person name="Chibana H."/>
            <person name="Dungan J."/>
            <person name="Kalman S."/>
            <person name="Magee B.B."/>
            <person name="Newport G."/>
            <person name="Thorstenson Y.R."/>
            <person name="Agabian N."/>
            <person name="Magee P.T."/>
            <person name="Davis R.W."/>
            <person name="Scherer S."/>
        </authorList>
    </citation>
    <scope>NUCLEOTIDE SEQUENCE [LARGE SCALE GENOMIC DNA]</scope>
    <source>
        <strain>SC5314 / ATCC MYA-2876</strain>
    </source>
</reference>
<reference key="2">
    <citation type="journal article" date="2007" name="Genome Biol.">
        <title>Assembly of the Candida albicans genome into sixteen supercontigs aligned on the eight chromosomes.</title>
        <authorList>
            <person name="van het Hoog M."/>
            <person name="Rast T.J."/>
            <person name="Martchenko M."/>
            <person name="Grindle S."/>
            <person name="Dignard D."/>
            <person name="Hogues H."/>
            <person name="Cuomo C."/>
            <person name="Berriman M."/>
            <person name="Scherer S."/>
            <person name="Magee B.B."/>
            <person name="Whiteway M."/>
            <person name="Chibana H."/>
            <person name="Nantel A."/>
            <person name="Magee P.T."/>
        </authorList>
    </citation>
    <scope>GENOME REANNOTATION</scope>
    <source>
        <strain>SC5314 / ATCC MYA-2876</strain>
    </source>
</reference>
<reference key="3">
    <citation type="journal article" date="2013" name="Genome Biol.">
        <title>Assembly of a phased diploid Candida albicans genome facilitates allele-specific measurements and provides a simple model for repeat and indel structure.</title>
        <authorList>
            <person name="Muzzey D."/>
            <person name="Schwartz K."/>
            <person name="Weissman J.S."/>
            <person name="Sherlock G."/>
        </authorList>
    </citation>
    <scope>NUCLEOTIDE SEQUENCE [LARGE SCALE GENOMIC DNA]</scope>
    <scope>GENOME REANNOTATION</scope>
    <source>
        <strain>SC5314 / ATCC MYA-2876</strain>
    </source>
</reference>
<reference key="4">
    <citation type="journal article" date="2004" name="Antimicrob. Agents Chemother.">
        <title>Comparison of gene expression profiles of Candida albicans azole-resistant clinical isolates and laboratory strains exposed to drugs inducing multidrug transporters.</title>
        <authorList>
            <person name="Karababa M."/>
            <person name="Coste A.T."/>
            <person name="Rognon B."/>
            <person name="Bille J."/>
            <person name="Sanglard D."/>
        </authorList>
    </citation>
    <scope>INDUCTION</scope>
</reference>
<reference key="5">
    <citation type="journal article" date="2006" name="Free Radic. Biol. Med.">
        <title>Cap1p is involved in multiple pathways of oxidative stress response in Candida albicans.</title>
        <authorList>
            <person name="Wang Y."/>
            <person name="Cao Y.Y."/>
            <person name="Jia X.M."/>
            <person name="Cao Y.B."/>
            <person name="Gao P.H."/>
            <person name="Fu X.P."/>
            <person name="Ying K."/>
            <person name="Chen W.S."/>
            <person name="Jiang Y.Y."/>
        </authorList>
    </citation>
    <scope>INDUCTION</scope>
</reference>
<reference key="6">
    <citation type="journal article" date="2015" name="PLoS Pathog.">
        <title>Flavodoxin-Like Proteins Protect Candida albicans from Oxidative Stress and Promote Virulence.</title>
        <authorList>
            <person name="Li L."/>
            <person name="Naseem S."/>
            <person name="Sharma S."/>
            <person name="Konopka J.B."/>
        </authorList>
    </citation>
    <scope>FUNCTION</scope>
    <scope>DISRUPTION PHENOTYPE</scope>
    <scope>SUBCELLULAR LOCATION</scope>
</reference>
<proteinExistence type="evidence at transcript level"/>
<gene>
    <name evidence="5" type="primary">PST2</name>
    <name type="ordered locus">CAALFM_C208640CA</name>
    <name type="ordered locus">orf19.11095</name>
</gene>